<protein>
    <recommendedName>
        <fullName evidence="1">1-(5-phosphoribosyl)-5-[(5-phosphoribosylamino)methylideneamino] imidazole-4-carboxamide isomerase</fullName>
        <ecNumber evidence="1">5.3.1.16</ecNumber>
    </recommendedName>
    <alternativeName>
        <fullName evidence="1">Phosphoribosylformimino-5-aminoimidazole carboxamide ribotide isomerase</fullName>
    </alternativeName>
</protein>
<keyword id="KW-0028">Amino-acid biosynthesis</keyword>
<keyword id="KW-0963">Cytoplasm</keyword>
<keyword id="KW-0368">Histidine biosynthesis</keyword>
<keyword id="KW-0413">Isomerase</keyword>
<keyword id="KW-1185">Reference proteome</keyword>
<comment type="catalytic activity">
    <reaction evidence="1">
        <text>1-(5-phospho-beta-D-ribosyl)-5-[(5-phospho-beta-D-ribosylamino)methylideneamino]imidazole-4-carboxamide = 5-[(5-phospho-1-deoxy-D-ribulos-1-ylimino)methylamino]-1-(5-phospho-beta-D-ribosyl)imidazole-4-carboxamide</text>
        <dbReference type="Rhea" id="RHEA:15469"/>
        <dbReference type="ChEBI" id="CHEBI:58435"/>
        <dbReference type="ChEBI" id="CHEBI:58525"/>
        <dbReference type="EC" id="5.3.1.16"/>
    </reaction>
</comment>
<comment type="pathway">
    <text evidence="1">Amino-acid biosynthesis; L-histidine biosynthesis; L-histidine from 5-phospho-alpha-D-ribose 1-diphosphate: step 4/9.</text>
</comment>
<comment type="subcellular location">
    <subcellularLocation>
        <location evidence="1">Cytoplasm</location>
    </subcellularLocation>
</comment>
<comment type="similarity">
    <text evidence="1">Belongs to the HisA/HisF family.</text>
</comment>
<sequence length="241" mass="25747">MSLTLLPAVDVRDGKAVRLRQGESGSETDYGSPFEAARTWVEAGAEWIHLVDLDAAFGTGNNRDQLREIVHELGDRVNIELSGGVRDDASLDAALEAGAARVNIGTAALENPDWTASVIKKYGDRVAVGLDVRGHTLAARGWTREGGDLFETMKFLDSVGCSRYVVTDVAKDGMMSGPNIQLLSEVAERTDAKVTASGGISKLDDLRAIKELAEIGVDSAILGKSLYARAFTLQEALEVAK</sequence>
<organism>
    <name type="scientific">Bifidobacterium longum (strain NCC 2705)</name>
    <dbReference type="NCBI Taxonomy" id="206672"/>
    <lineage>
        <taxon>Bacteria</taxon>
        <taxon>Bacillati</taxon>
        <taxon>Actinomycetota</taxon>
        <taxon>Actinomycetes</taxon>
        <taxon>Bifidobacteriales</taxon>
        <taxon>Bifidobacteriaceae</taxon>
        <taxon>Bifidobacterium</taxon>
    </lineage>
</organism>
<reference key="1">
    <citation type="journal article" date="2002" name="Proc. Natl. Acad. Sci. U.S.A.">
        <title>The genome sequence of Bifidobacterium longum reflects its adaptation to the human gastrointestinal tract.</title>
        <authorList>
            <person name="Schell M.A."/>
            <person name="Karmirantzou M."/>
            <person name="Snel B."/>
            <person name="Vilanova D."/>
            <person name="Berger B."/>
            <person name="Pessi G."/>
            <person name="Zwahlen M.-C."/>
            <person name="Desiere F."/>
            <person name="Bork P."/>
            <person name="Delley M."/>
            <person name="Pridmore R.D."/>
            <person name="Arigoni F."/>
        </authorList>
    </citation>
    <scope>NUCLEOTIDE SEQUENCE [LARGE SCALE GENOMIC DNA]</scope>
    <source>
        <strain>NCC 2705</strain>
    </source>
</reference>
<proteinExistence type="inferred from homology"/>
<dbReference type="EC" id="5.3.1.16" evidence="1"/>
<dbReference type="EMBL" id="AE014295">
    <property type="protein sequence ID" value="AAN25100.1"/>
    <property type="molecule type" value="Genomic_DNA"/>
</dbReference>
<dbReference type="RefSeq" id="NP_696464.1">
    <property type="nucleotide sequence ID" value="NC_004307.2"/>
</dbReference>
<dbReference type="SMR" id="Q8G4S5"/>
<dbReference type="STRING" id="206672.BL1300"/>
<dbReference type="EnsemblBacteria" id="AAN25100">
    <property type="protein sequence ID" value="AAN25100"/>
    <property type="gene ID" value="BL1300"/>
</dbReference>
<dbReference type="KEGG" id="blo:BL1300"/>
<dbReference type="PATRIC" id="fig|206672.9.peg.149"/>
<dbReference type="HOGENOM" id="CLU_048577_1_1_11"/>
<dbReference type="OrthoDB" id="9807749at2"/>
<dbReference type="PhylomeDB" id="Q8G4S5"/>
<dbReference type="UniPathway" id="UPA00031">
    <property type="reaction ID" value="UER00009"/>
</dbReference>
<dbReference type="Proteomes" id="UP000000439">
    <property type="component" value="Chromosome"/>
</dbReference>
<dbReference type="GO" id="GO:0005737">
    <property type="term" value="C:cytoplasm"/>
    <property type="evidence" value="ECO:0007669"/>
    <property type="project" value="UniProtKB-SubCell"/>
</dbReference>
<dbReference type="GO" id="GO:0003949">
    <property type="term" value="F:1-(5-phosphoribosyl)-5-[(5-phosphoribosylamino)methylideneamino]imidazole-4-carboxamide isomerase activity"/>
    <property type="evidence" value="ECO:0007669"/>
    <property type="project" value="UniProtKB-UniRule"/>
</dbReference>
<dbReference type="GO" id="GO:0004640">
    <property type="term" value="F:phosphoribosylanthranilate isomerase activity"/>
    <property type="evidence" value="ECO:0007669"/>
    <property type="project" value="InterPro"/>
</dbReference>
<dbReference type="GO" id="GO:0000105">
    <property type="term" value="P:L-histidine biosynthetic process"/>
    <property type="evidence" value="ECO:0007669"/>
    <property type="project" value="UniProtKB-UniRule"/>
</dbReference>
<dbReference type="GO" id="GO:0000162">
    <property type="term" value="P:L-tryptophan biosynthetic process"/>
    <property type="evidence" value="ECO:0007669"/>
    <property type="project" value="InterPro"/>
</dbReference>
<dbReference type="CDD" id="cd04732">
    <property type="entry name" value="HisA"/>
    <property type="match status" value="1"/>
</dbReference>
<dbReference type="FunFam" id="3.20.20.70:FF:000009">
    <property type="entry name" value="1-(5-phosphoribosyl)-5-[(5-phosphoribosylamino)methylideneamino] imidazole-4-carboxamide isomerase"/>
    <property type="match status" value="1"/>
</dbReference>
<dbReference type="Gene3D" id="3.20.20.70">
    <property type="entry name" value="Aldolase class I"/>
    <property type="match status" value="1"/>
</dbReference>
<dbReference type="HAMAP" id="MF_01014">
    <property type="entry name" value="HisA"/>
    <property type="match status" value="1"/>
</dbReference>
<dbReference type="InterPro" id="IPR013785">
    <property type="entry name" value="Aldolase_TIM"/>
</dbReference>
<dbReference type="InterPro" id="IPR006062">
    <property type="entry name" value="His_biosynth"/>
</dbReference>
<dbReference type="InterPro" id="IPR010188">
    <property type="entry name" value="HisA/PriA_Actinobacteria"/>
</dbReference>
<dbReference type="InterPro" id="IPR044524">
    <property type="entry name" value="Isoase_HisA-like"/>
</dbReference>
<dbReference type="InterPro" id="IPR023016">
    <property type="entry name" value="Isoase_HisA-like_bact"/>
</dbReference>
<dbReference type="InterPro" id="IPR011060">
    <property type="entry name" value="RibuloseP-bd_barrel"/>
</dbReference>
<dbReference type="NCBIfam" id="TIGR01919">
    <property type="entry name" value="hisA-trpF"/>
    <property type="match status" value="1"/>
</dbReference>
<dbReference type="PANTHER" id="PTHR43090">
    <property type="entry name" value="1-(5-PHOSPHORIBOSYL)-5-[(5-PHOSPHORIBOSYLAMINO)METHYLIDENEAMINO] IMIDAZOLE-4-CARBOXAMIDE ISOMERASE"/>
    <property type="match status" value="1"/>
</dbReference>
<dbReference type="PANTHER" id="PTHR43090:SF2">
    <property type="entry name" value="1-(5-PHOSPHORIBOSYL)-5-[(5-PHOSPHORIBOSYLAMINO)METHYLIDENEAMINO] IMIDAZOLE-4-CARBOXAMIDE ISOMERASE"/>
    <property type="match status" value="1"/>
</dbReference>
<dbReference type="Pfam" id="PF00977">
    <property type="entry name" value="His_biosynth"/>
    <property type="match status" value="1"/>
</dbReference>
<dbReference type="SUPFAM" id="SSF51366">
    <property type="entry name" value="Ribulose-phoshate binding barrel"/>
    <property type="match status" value="1"/>
</dbReference>
<evidence type="ECO:0000255" key="1">
    <source>
        <dbReference type="HAMAP-Rule" id="MF_01014"/>
    </source>
</evidence>
<gene>
    <name evidence="1" type="primary">hisA</name>
    <name type="ordered locus">BL1300</name>
</gene>
<accession>Q8G4S5</accession>
<name>HIS4_BIFLO</name>
<feature type="chain" id="PRO_0000141980" description="1-(5-phosphoribosyl)-5-[(5-phosphoribosylamino)methylideneamino] imidazole-4-carboxamide isomerase">
    <location>
        <begin position="1"/>
        <end position="241"/>
    </location>
</feature>
<feature type="active site" description="Proton acceptor" evidence="1">
    <location>
        <position position="10"/>
    </location>
</feature>
<feature type="active site" description="Proton donor" evidence="1">
    <location>
        <position position="131"/>
    </location>
</feature>